<accession>A0PT34</accession>
<evidence type="ECO:0000255" key="1">
    <source>
        <dbReference type="HAMAP-Rule" id="MF_00218"/>
    </source>
</evidence>
<sequence length="353" mass="37550">MSTRRDLPQSPYLAAVAGRKPSRVPVWFMRQAGRSLPEYRALRRQHSMLAACFEPEVACEVTMQPIRRYHVDAAILFSDIVVPLRAAGVDLDIVADVGPVIAAPVRTVADVDAIKPIDSQSIAPVLDAVELLVAELGDTPLIGFAGAPFTLASYLVEGGPSRHHARTKAMMLAEPATWHALMTKLTDLTIEFLLGQIRAGVDAIQVFDSWAGMLSLADYRQYALPHSARVFATLAEHGVPMTHFGVGTAELLGAMSEAVKPGTAKVVGVDWRTALADAAARVQPGTALQGNLDPVVLLAGWPAVERAARAVVDDGRRAVDAGAAGYVFNLGHGVLPQTDPGVLTDLVSLVHSL</sequence>
<reference key="1">
    <citation type="journal article" date="2007" name="Genome Res.">
        <title>Reductive evolution and niche adaptation inferred from the genome of Mycobacterium ulcerans, the causative agent of Buruli ulcer.</title>
        <authorList>
            <person name="Stinear T.P."/>
            <person name="Seemann T."/>
            <person name="Pidot S."/>
            <person name="Frigui W."/>
            <person name="Reysset G."/>
            <person name="Garnier T."/>
            <person name="Meurice G."/>
            <person name="Simon D."/>
            <person name="Bouchier C."/>
            <person name="Ma L."/>
            <person name="Tichit M."/>
            <person name="Porter J.L."/>
            <person name="Ryan J."/>
            <person name="Johnson P.D.R."/>
            <person name="Davies J.K."/>
            <person name="Jenkin G.A."/>
            <person name="Small P.L.C."/>
            <person name="Jones L.M."/>
            <person name="Tekaia F."/>
            <person name="Laval F."/>
            <person name="Daffe M."/>
            <person name="Parkhill J."/>
            <person name="Cole S.T."/>
        </authorList>
    </citation>
    <scope>NUCLEOTIDE SEQUENCE [LARGE SCALE GENOMIC DNA]</scope>
    <source>
        <strain>Agy99</strain>
    </source>
</reference>
<proteinExistence type="inferred from homology"/>
<comment type="function">
    <text evidence="1">Catalyzes the decarboxylation of four acetate groups of uroporphyrinogen-III to yield coproporphyrinogen-III.</text>
</comment>
<comment type="catalytic activity">
    <reaction evidence="1">
        <text>uroporphyrinogen III + 4 H(+) = coproporphyrinogen III + 4 CO2</text>
        <dbReference type="Rhea" id="RHEA:19865"/>
        <dbReference type="ChEBI" id="CHEBI:15378"/>
        <dbReference type="ChEBI" id="CHEBI:16526"/>
        <dbReference type="ChEBI" id="CHEBI:57308"/>
        <dbReference type="ChEBI" id="CHEBI:57309"/>
        <dbReference type="EC" id="4.1.1.37"/>
    </reaction>
</comment>
<comment type="pathway">
    <text evidence="1">Porphyrin-containing compound metabolism; protoporphyrin-IX biosynthesis; coproporphyrinogen-III from 5-aminolevulinate: step 4/4.</text>
</comment>
<comment type="subunit">
    <text evidence="1">Homodimer.</text>
</comment>
<comment type="subcellular location">
    <subcellularLocation>
        <location evidence="1">Cytoplasm</location>
    </subcellularLocation>
</comment>
<comment type="similarity">
    <text evidence="1">Belongs to the uroporphyrinogen decarboxylase family.</text>
</comment>
<dbReference type="EC" id="4.1.1.37" evidence="1"/>
<dbReference type="EMBL" id="CP000325">
    <property type="protein sequence ID" value="ABL05503.1"/>
    <property type="molecule type" value="Genomic_DNA"/>
</dbReference>
<dbReference type="RefSeq" id="WP_011741112.1">
    <property type="nucleotide sequence ID" value="NC_008611.1"/>
</dbReference>
<dbReference type="SMR" id="A0PT34"/>
<dbReference type="KEGG" id="mul:MUL_3312"/>
<dbReference type="eggNOG" id="COG0407">
    <property type="taxonomic scope" value="Bacteria"/>
</dbReference>
<dbReference type="HOGENOM" id="CLU_040933_0_1_11"/>
<dbReference type="UniPathway" id="UPA00251">
    <property type="reaction ID" value="UER00321"/>
</dbReference>
<dbReference type="Proteomes" id="UP000000765">
    <property type="component" value="Chromosome"/>
</dbReference>
<dbReference type="GO" id="GO:0005829">
    <property type="term" value="C:cytosol"/>
    <property type="evidence" value="ECO:0007669"/>
    <property type="project" value="TreeGrafter"/>
</dbReference>
<dbReference type="GO" id="GO:0004853">
    <property type="term" value="F:uroporphyrinogen decarboxylase activity"/>
    <property type="evidence" value="ECO:0007669"/>
    <property type="project" value="UniProtKB-UniRule"/>
</dbReference>
<dbReference type="GO" id="GO:0006782">
    <property type="term" value="P:protoporphyrinogen IX biosynthetic process"/>
    <property type="evidence" value="ECO:0007669"/>
    <property type="project" value="UniProtKB-UniRule"/>
</dbReference>
<dbReference type="CDD" id="cd00717">
    <property type="entry name" value="URO-D"/>
    <property type="match status" value="1"/>
</dbReference>
<dbReference type="FunFam" id="3.20.20.210:FF:000007">
    <property type="entry name" value="Uroporphyrinogen decarboxylase"/>
    <property type="match status" value="1"/>
</dbReference>
<dbReference type="Gene3D" id="3.20.20.210">
    <property type="match status" value="1"/>
</dbReference>
<dbReference type="HAMAP" id="MF_00218">
    <property type="entry name" value="URO_D"/>
    <property type="match status" value="1"/>
</dbReference>
<dbReference type="InterPro" id="IPR038071">
    <property type="entry name" value="UROD/MetE-like_sf"/>
</dbReference>
<dbReference type="InterPro" id="IPR006361">
    <property type="entry name" value="Uroporphyrinogen_deCO2ase_HemE"/>
</dbReference>
<dbReference type="InterPro" id="IPR000257">
    <property type="entry name" value="Uroporphyrinogen_deCOase"/>
</dbReference>
<dbReference type="NCBIfam" id="TIGR01464">
    <property type="entry name" value="hemE"/>
    <property type="match status" value="1"/>
</dbReference>
<dbReference type="PANTHER" id="PTHR21091">
    <property type="entry name" value="METHYLTETRAHYDROFOLATE:HOMOCYSTEINE METHYLTRANSFERASE RELATED"/>
    <property type="match status" value="1"/>
</dbReference>
<dbReference type="PANTHER" id="PTHR21091:SF169">
    <property type="entry name" value="UROPORPHYRINOGEN DECARBOXYLASE"/>
    <property type="match status" value="1"/>
</dbReference>
<dbReference type="Pfam" id="PF01208">
    <property type="entry name" value="URO-D"/>
    <property type="match status" value="1"/>
</dbReference>
<dbReference type="SUPFAM" id="SSF51726">
    <property type="entry name" value="UROD/MetE-like"/>
    <property type="match status" value="1"/>
</dbReference>
<dbReference type="PROSITE" id="PS00906">
    <property type="entry name" value="UROD_1"/>
    <property type="match status" value="1"/>
</dbReference>
<dbReference type="PROSITE" id="PS00907">
    <property type="entry name" value="UROD_2"/>
    <property type="match status" value="1"/>
</dbReference>
<keyword id="KW-0963">Cytoplasm</keyword>
<keyword id="KW-0210">Decarboxylase</keyword>
<keyword id="KW-0456">Lyase</keyword>
<keyword id="KW-0627">Porphyrin biosynthesis</keyword>
<feature type="chain" id="PRO_1000023925" description="Uroporphyrinogen decarboxylase">
    <location>
        <begin position="1"/>
        <end position="353"/>
    </location>
</feature>
<feature type="binding site" evidence="1">
    <location>
        <begin position="30"/>
        <end position="34"/>
    </location>
    <ligand>
        <name>substrate</name>
    </ligand>
</feature>
<feature type="binding site" evidence="1">
    <location>
        <position position="79"/>
    </location>
    <ligand>
        <name>substrate</name>
    </ligand>
</feature>
<feature type="binding site" evidence="1">
    <location>
        <position position="154"/>
    </location>
    <ligand>
        <name>substrate</name>
    </ligand>
</feature>
<feature type="binding site" evidence="1">
    <location>
        <position position="209"/>
    </location>
    <ligand>
        <name>substrate</name>
    </ligand>
</feature>
<feature type="binding site" evidence="1">
    <location>
        <position position="332"/>
    </location>
    <ligand>
        <name>substrate</name>
    </ligand>
</feature>
<feature type="site" description="Transition state stabilizer" evidence="1">
    <location>
        <position position="79"/>
    </location>
</feature>
<gene>
    <name evidence="1" type="primary">hemE</name>
    <name type="ordered locus">MUL_3312</name>
</gene>
<organism>
    <name type="scientific">Mycobacterium ulcerans (strain Agy99)</name>
    <dbReference type="NCBI Taxonomy" id="362242"/>
    <lineage>
        <taxon>Bacteria</taxon>
        <taxon>Bacillati</taxon>
        <taxon>Actinomycetota</taxon>
        <taxon>Actinomycetes</taxon>
        <taxon>Mycobacteriales</taxon>
        <taxon>Mycobacteriaceae</taxon>
        <taxon>Mycobacterium</taxon>
        <taxon>Mycobacterium ulcerans group</taxon>
    </lineage>
</organism>
<protein>
    <recommendedName>
        <fullName evidence="1">Uroporphyrinogen decarboxylase</fullName>
        <shortName evidence="1">UPD</shortName>
        <shortName evidence="1">URO-D</shortName>
        <ecNumber evidence="1">4.1.1.37</ecNumber>
    </recommendedName>
</protein>
<name>DCUP_MYCUA</name>